<keyword id="KW-0963">Cytoplasm</keyword>
<keyword id="KW-0269">Exonuclease</keyword>
<keyword id="KW-0378">Hydrolase</keyword>
<keyword id="KW-0540">Nuclease</keyword>
<reference key="1">
    <citation type="submission" date="2008-10" db="EMBL/GenBank/DDBJ databases">
        <title>Genome sequence of Clostridium botulinum A2 Kyoto.</title>
        <authorList>
            <person name="Shrivastava S."/>
            <person name="Brinkac L.M."/>
            <person name="Brown J.L."/>
            <person name="Bruce D."/>
            <person name="Detter C.C."/>
            <person name="Johnson E.A."/>
            <person name="Munk C.A."/>
            <person name="Smith L.A."/>
            <person name="Smith T.J."/>
            <person name="Sutton G."/>
            <person name="Brettin T.S."/>
        </authorList>
    </citation>
    <scope>NUCLEOTIDE SEQUENCE [LARGE SCALE GENOMIC DNA]</scope>
    <source>
        <strain>Kyoto / Type A2</strain>
    </source>
</reference>
<evidence type="ECO:0000255" key="1">
    <source>
        <dbReference type="HAMAP-Rule" id="MF_00337"/>
    </source>
</evidence>
<name>EX7S_CLOBJ</name>
<accession>C1FPB1</accession>
<gene>
    <name evidence="1" type="primary">xseB</name>
    <name type="ordered locus">CLM_2101</name>
</gene>
<dbReference type="EC" id="3.1.11.6" evidence="1"/>
<dbReference type="EMBL" id="CP001581">
    <property type="protein sequence ID" value="ACO85055.1"/>
    <property type="molecule type" value="Genomic_DNA"/>
</dbReference>
<dbReference type="RefSeq" id="WP_012099921.1">
    <property type="nucleotide sequence ID" value="NC_012563.1"/>
</dbReference>
<dbReference type="SMR" id="C1FPB1"/>
<dbReference type="KEGG" id="cby:CLM_2101"/>
<dbReference type="eggNOG" id="COG1722">
    <property type="taxonomic scope" value="Bacteria"/>
</dbReference>
<dbReference type="HOGENOM" id="CLU_145918_3_2_9"/>
<dbReference type="Proteomes" id="UP000001374">
    <property type="component" value="Chromosome"/>
</dbReference>
<dbReference type="GO" id="GO:0005829">
    <property type="term" value="C:cytosol"/>
    <property type="evidence" value="ECO:0007669"/>
    <property type="project" value="TreeGrafter"/>
</dbReference>
<dbReference type="GO" id="GO:0009318">
    <property type="term" value="C:exodeoxyribonuclease VII complex"/>
    <property type="evidence" value="ECO:0007669"/>
    <property type="project" value="InterPro"/>
</dbReference>
<dbReference type="GO" id="GO:0008855">
    <property type="term" value="F:exodeoxyribonuclease VII activity"/>
    <property type="evidence" value="ECO:0007669"/>
    <property type="project" value="UniProtKB-UniRule"/>
</dbReference>
<dbReference type="GO" id="GO:0006308">
    <property type="term" value="P:DNA catabolic process"/>
    <property type="evidence" value="ECO:0007669"/>
    <property type="project" value="UniProtKB-UniRule"/>
</dbReference>
<dbReference type="FunFam" id="1.10.287.1040:FF:000010">
    <property type="entry name" value="Exodeoxyribonuclease 7 small subunit"/>
    <property type="match status" value="1"/>
</dbReference>
<dbReference type="Gene3D" id="1.10.287.1040">
    <property type="entry name" value="Exonuclease VII, small subunit"/>
    <property type="match status" value="1"/>
</dbReference>
<dbReference type="HAMAP" id="MF_00337">
    <property type="entry name" value="Exonuc_7_S"/>
    <property type="match status" value="1"/>
</dbReference>
<dbReference type="InterPro" id="IPR003761">
    <property type="entry name" value="Exonuc_VII_S"/>
</dbReference>
<dbReference type="InterPro" id="IPR037004">
    <property type="entry name" value="Exonuc_VII_ssu_sf"/>
</dbReference>
<dbReference type="NCBIfam" id="NF002140">
    <property type="entry name" value="PRK00977.1-4"/>
    <property type="match status" value="1"/>
</dbReference>
<dbReference type="NCBIfam" id="TIGR01280">
    <property type="entry name" value="xseB"/>
    <property type="match status" value="1"/>
</dbReference>
<dbReference type="PANTHER" id="PTHR34137">
    <property type="entry name" value="EXODEOXYRIBONUCLEASE 7 SMALL SUBUNIT"/>
    <property type="match status" value="1"/>
</dbReference>
<dbReference type="PANTHER" id="PTHR34137:SF1">
    <property type="entry name" value="EXODEOXYRIBONUCLEASE 7 SMALL SUBUNIT"/>
    <property type="match status" value="1"/>
</dbReference>
<dbReference type="Pfam" id="PF02609">
    <property type="entry name" value="Exonuc_VII_S"/>
    <property type="match status" value="1"/>
</dbReference>
<dbReference type="PIRSF" id="PIRSF006488">
    <property type="entry name" value="Exonuc_VII_S"/>
    <property type="match status" value="1"/>
</dbReference>
<dbReference type="SUPFAM" id="SSF116842">
    <property type="entry name" value="XseB-like"/>
    <property type="match status" value="1"/>
</dbReference>
<feature type="chain" id="PRO_1000200246" description="Exodeoxyribonuclease 7 small subunit">
    <location>
        <begin position="1"/>
        <end position="71"/>
    </location>
</feature>
<sequence length="71" mass="8238">MGRKKESFENMLEKLETIVDSMDNGEITLEDSMKSYEEGIKLCNKLYKVLKDAEGKIKILEDNKEEDFESS</sequence>
<comment type="function">
    <text evidence="1">Bidirectionally degrades single-stranded DNA into large acid-insoluble oligonucleotides, which are then degraded further into small acid-soluble oligonucleotides.</text>
</comment>
<comment type="catalytic activity">
    <reaction evidence="1">
        <text>Exonucleolytic cleavage in either 5'- to 3'- or 3'- to 5'-direction to yield nucleoside 5'-phosphates.</text>
        <dbReference type="EC" id="3.1.11.6"/>
    </reaction>
</comment>
<comment type="subunit">
    <text evidence="1">Heterooligomer composed of large and small subunits.</text>
</comment>
<comment type="subcellular location">
    <subcellularLocation>
        <location evidence="1">Cytoplasm</location>
    </subcellularLocation>
</comment>
<comment type="similarity">
    <text evidence="1">Belongs to the XseB family.</text>
</comment>
<protein>
    <recommendedName>
        <fullName evidence="1">Exodeoxyribonuclease 7 small subunit</fullName>
        <ecNumber evidence="1">3.1.11.6</ecNumber>
    </recommendedName>
    <alternativeName>
        <fullName evidence="1">Exodeoxyribonuclease VII small subunit</fullName>
        <shortName evidence="1">Exonuclease VII small subunit</shortName>
    </alternativeName>
</protein>
<proteinExistence type="inferred from homology"/>
<organism>
    <name type="scientific">Clostridium botulinum (strain Kyoto / Type A2)</name>
    <dbReference type="NCBI Taxonomy" id="536232"/>
    <lineage>
        <taxon>Bacteria</taxon>
        <taxon>Bacillati</taxon>
        <taxon>Bacillota</taxon>
        <taxon>Clostridia</taxon>
        <taxon>Eubacteriales</taxon>
        <taxon>Clostridiaceae</taxon>
        <taxon>Clostridium</taxon>
    </lineage>
</organism>